<reference key="1">
    <citation type="submission" date="2009-07" db="EMBL/GenBank/DDBJ databases">
        <title>Complete sequence of Pectobacterium carotovorum subsp. carotovorum PC1.</title>
        <authorList>
            <consortium name="US DOE Joint Genome Institute"/>
            <person name="Lucas S."/>
            <person name="Copeland A."/>
            <person name="Lapidus A."/>
            <person name="Glavina del Rio T."/>
            <person name="Tice H."/>
            <person name="Bruce D."/>
            <person name="Goodwin L."/>
            <person name="Pitluck S."/>
            <person name="Munk A.C."/>
            <person name="Brettin T."/>
            <person name="Detter J.C."/>
            <person name="Han C."/>
            <person name="Tapia R."/>
            <person name="Larimer F."/>
            <person name="Land M."/>
            <person name="Hauser L."/>
            <person name="Kyrpides N."/>
            <person name="Mikhailova N."/>
            <person name="Balakrishnan V."/>
            <person name="Glasner J."/>
            <person name="Perna N.T."/>
        </authorList>
    </citation>
    <scope>NUCLEOTIDE SEQUENCE [LARGE SCALE GENOMIC DNA]</scope>
    <source>
        <strain>PC1</strain>
    </source>
</reference>
<gene>
    <name evidence="1" type="primary">adk</name>
    <name type="ordered locus">PC1_1080</name>
</gene>
<accession>C6DB87</accession>
<sequence length="214" mass="23797">MRIILLGAPGAGKGTQAQFIMEKYGIPQISTGDMLRAAVKAGTELGKQAKEIMDAGKLVTDELVIALVKERIAQDDCRNGFLLDGFPRTIPQADAMKDVGINVDYVIEFAVPDELIIDRIVGRRVHAASGRVYHVKFNPPKVEGKDDVTGEDLTIRKDDHEDTVRKRLVEYHQQTAPLVSYYQKEADAGNTRYFKVEGTRKVEEVRAELETILG</sequence>
<keyword id="KW-0067">ATP-binding</keyword>
<keyword id="KW-0963">Cytoplasm</keyword>
<keyword id="KW-0418">Kinase</keyword>
<keyword id="KW-0545">Nucleotide biosynthesis</keyword>
<keyword id="KW-0547">Nucleotide-binding</keyword>
<keyword id="KW-0808">Transferase</keyword>
<protein>
    <recommendedName>
        <fullName evidence="1">Adenylate kinase</fullName>
        <shortName evidence="1">AK</shortName>
        <ecNumber evidence="1">2.7.4.3</ecNumber>
    </recommendedName>
    <alternativeName>
        <fullName evidence="1">ATP-AMP transphosphorylase</fullName>
    </alternativeName>
    <alternativeName>
        <fullName evidence="1">ATP:AMP phosphotransferase</fullName>
    </alternativeName>
    <alternativeName>
        <fullName evidence="1">Adenylate monophosphate kinase</fullName>
    </alternativeName>
</protein>
<organism>
    <name type="scientific">Pectobacterium carotovorum subsp. carotovorum (strain PC1)</name>
    <dbReference type="NCBI Taxonomy" id="561230"/>
    <lineage>
        <taxon>Bacteria</taxon>
        <taxon>Pseudomonadati</taxon>
        <taxon>Pseudomonadota</taxon>
        <taxon>Gammaproteobacteria</taxon>
        <taxon>Enterobacterales</taxon>
        <taxon>Pectobacteriaceae</taxon>
        <taxon>Pectobacterium</taxon>
    </lineage>
</organism>
<name>KAD_PECCP</name>
<dbReference type="EC" id="2.7.4.3" evidence="1"/>
<dbReference type="EMBL" id="CP001657">
    <property type="protein sequence ID" value="ACT12129.1"/>
    <property type="molecule type" value="Genomic_DNA"/>
</dbReference>
<dbReference type="RefSeq" id="WP_015839371.1">
    <property type="nucleotide sequence ID" value="NC_012917.1"/>
</dbReference>
<dbReference type="SMR" id="C6DB87"/>
<dbReference type="STRING" id="561230.PC1_1080"/>
<dbReference type="KEGG" id="pct:PC1_1080"/>
<dbReference type="eggNOG" id="COG0563">
    <property type="taxonomic scope" value="Bacteria"/>
</dbReference>
<dbReference type="HOGENOM" id="CLU_032354_1_2_6"/>
<dbReference type="OrthoDB" id="9805030at2"/>
<dbReference type="UniPathway" id="UPA00588">
    <property type="reaction ID" value="UER00649"/>
</dbReference>
<dbReference type="Proteomes" id="UP000002736">
    <property type="component" value="Chromosome"/>
</dbReference>
<dbReference type="GO" id="GO:0005737">
    <property type="term" value="C:cytoplasm"/>
    <property type="evidence" value="ECO:0007669"/>
    <property type="project" value="UniProtKB-SubCell"/>
</dbReference>
<dbReference type="GO" id="GO:0004017">
    <property type="term" value="F:adenylate kinase activity"/>
    <property type="evidence" value="ECO:0007669"/>
    <property type="project" value="UniProtKB-UniRule"/>
</dbReference>
<dbReference type="GO" id="GO:0005524">
    <property type="term" value="F:ATP binding"/>
    <property type="evidence" value="ECO:0007669"/>
    <property type="project" value="UniProtKB-UniRule"/>
</dbReference>
<dbReference type="GO" id="GO:0044209">
    <property type="term" value="P:AMP salvage"/>
    <property type="evidence" value="ECO:0007669"/>
    <property type="project" value="UniProtKB-UniRule"/>
</dbReference>
<dbReference type="CDD" id="cd01428">
    <property type="entry name" value="ADK"/>
    <property type="match status" value="1"/>
</dbReference>
<dbReference type="FunFam" id="3.40.50.300:FF:000106">
    <property type="entry name" value="Adenylate kinase mitochondrial"/>
    <property type="match status" value="1"/>
</dbReference>
<dbReference type="Gene3D" id="3.40.50.300">
    <property type="entry name" value="P-loop containing nucleotide triphosphate hydrolases"/>
    <property type="match status" value="1"/>
</dbReference>
<dbReference type="HAMAP" id="MF_00235">
    <property type="entry name" value="Adenylate_kinase_Adk"/>
    <property type="match status" value="1"/>
</dbReference>
<dbReference type="InterPro" id="IPR006259">
    <property type="entry name" value="Adenyl_kin_sub"/>
</dbReference>
<dbReference type="InterPro" id="IPR000850">
    <property type="entry name" value="Adenylat/UMP-CMP_kin"/>
</dbReference>
<dbReference type="InterPro" id="IPR033690">
    <property type="entry name" value="Adenylat_kinase_CS"/>
</dbReference>
<dbReference type="InterPro" id="IPR007862">
    <property type="entry name" value="Adenylate_kinase_lid-dom"/>
</dbReference>
<dbReference type="InterPro" id="IPR027417">
    <property type="entry name" value="P-loop_NTPase"/>
</dbReference>
<dbReference type="NCBIfam" id="TIGR01351">
    <property type="entry name" value="adk"/>
    <property type="match status" value="1"/>
</dbReference>
<dbReference type="NCBIfam" id="NF001379">
    <property type="entry name" value="PRK00279.1-1"/>
    <property type="match status" value="1"/>
</dbReference>
<dbReference type="NCBIfam" id="NF001380">
    <property type="entry name" value="PRK00279.1-2"/>
    <property type="match status" value="1"/>
</dbReference>
<dbReference type="NCBIfam" id="NF001381">
    <property type="entry name" value="PRK00279.1-3"/>
    <property type="match status" value="1"/>
</dbReference>
<dbReference type="NCBIfam" id="NF011100">
    <property type="entry name" value="PRK14527.1"/>
    <property type="match status" value="1"/>
</dbReference>
<dbReference type="PANTHER" id="PTHR23359">
    <property type="entry name" value="NUCLEOTIDE KINASE"/>
    <property type="match status" value="1"/>
</dbReference>
<dbReference type="Pfam" id="PF00406">
    <property type="entry name" value="ADK"/>
    <property type="match status" value="1"/>
</dbReference>
<dbReference type="Pfam" id="PF05191">
    <property type="entry name" value="ADK_lid"/>
    <property type="match status" value="1"/>
</dbReference>
<dbReference type="PRINTS" id="PR00094">
    <property type="entry name" value="ADENYLTKNASE"/>
</dbReference>
<dbReference type="SUPFAM" id="SSF52540">
    <property type="entry name" value="P-loop containing nucleoside triphosphate hydrolases"/>
    <property type="match status" value="1"/>
</dbReference>
<dbReference type="PROSITE" id="PS00113">
    <property type="entry name" value="ADENYLATE_KINASE"/>
    <property type="match status" value="1"/>
</dbReference>
<comment type="function">
    <text evidence="1">Catalyzes the reversible transfer of the terminal phosphate group between ATP and AMP. Plays an important role in cellular energy homeostasis and in adenine nucleotide metabolism.</text>
</comment>
<comment type="catalytic activity">
    <reaction evidence="1">
        <text>AMP + ATP = 2 ADP</text>
        <dbReference type="Rhea" id="RHEA:12973"/>
        <dbReference type="ChEBI" id="CHEBI:30616"/>
        <dbReference type="ChEBI" id="CHEBI:456215"/>
        <dbReference type="ChEBI" id="CHEBI:456216"/>
        <dbReference type="EC" id="2.7.4.3"/>
    </reaction>
</comment>
<comment type="pathway">
    <text evidence="1">Purine metabolism; AMP biosynthesis via salvage pathway; AMP from ADP: step 1/1.</text>
</comment>
<comment type="subunit">
    <text evidence="1">Monomer.</text>
</comment>
<comment type="subcellular location">
    <subcellularLocation>
        <location evidence="1">Cytoplasm</location>
    </subcellularLocation>
</comment>
<comment type="domain">
    <text evidence="1">Consists of three domains, a large central CORE domain and two small peripheral domains, NMPbind and LID, which undergo movements during catalysis. The LID domain closes over the site of phosphoryl transfer upon ATP binding. Assembling and dissambling the active center during each catalytic cycle provides an effective means to prevent ATP hydrolysis.</text>
</comment>
<comment type="similarity">
    <text evidence="1">Belongs to the adenylate kinase family.</text>
</comment>
<proteinExistence type="inferred from homology"/>
<evidence type="ECO:0000255" key="1">
    <source>
        <dbReference type="HAMAP-Rule" id="MF_00235"/>
    </source>
</evidence>
<feature type="chain" id="PRO_1000204421" description="Adenylate kinase">
    <location>
        <begin position="1"/>
        <end position="214"/>
    </location>
</feature>
<feature type="region of interest" description="NMP" evidence="1">
    <location>
        <begin position="30"/>
        <end position="59"/>
    </location>
</feature>
<feature type="region of interest" description="LID">
    <location>
        <begin position="122"/>
        <end position="159"/>
    </location>
</feature>
<feature type="binding site" evidence="1">
    <location>
        <begin position="10"/>
        <end position="15"/>
    </location>
    <ligand>
        <name>ATP</name>
        <dbReference type="ChEBI" id="CHEBI:30616"/>
    </ligand>
</feature>
<feature type="binding site" evidence="1">
    <location>
        <position position="31"/>
    </location>
    <ligand>
        <name>AMP</name>
        <dbReference type="ChEBI" id="CHEBI:456215"/>
    </ligand>
</feature>
<feature type="binding site" evidence="1">
    <location>
        <position position="36"/>
    </location>
    <ligand>
        <name>AMP</name>
        <dbReference type="ChEBI" id="CHEBI:456215"/>
    </ligand>
</feature>
<feature type="binding site" evidence="1">
    <location>
        <begin position="57"/>
        <end position="59"/>
    </location>
    <ligand>
        <name>AMP</name>
        <dbReference type="ChEBI" id="CHEBI:456215"/>
    </ligand>
</feature>
<feature type="binding site" evidence="1">
    <location>
        <begin position="85"/>
        <end position="88"/>
    </location>
    <ligand>
        <name>AMP</name>
        <dbReference type="ChEBI" id="CHEBI:456215"/>
    </ligand>
</feature>
<feature type="binding site" evidence="1">
    <location>
        <position position="92"/>
    </location>
    <ligand>
        <name>AMP</name>
        <dbReference type="ChEBI" id="CHEBI:456215"/>
    </ligand>
</feature>
<feature type="binding site" evidence="1">
    <location>
        <position position="123"/>
    </location>
    <ligand>
        <name>ATP</name>
        <dbReference type="ChEBI" id="CHEBI:30616"/>
    </ligand>
</feature>
<feature type="binding site" evidence="1">
    <location>
        <begin position="132"/>
        <end position="133"/>
    </location>
    <ligand>
        <name>ATP</name>
        <dbReference type="ChEBI" id="CHEBI:30616"/>
    </ligand>
</feature>
<feature type="binding site" evidence="1">
    <location>
        <position position="156"/>
    </location>
    <ligand>
        <name>AMP</name>
        <dbReference type="ChEBI" id="CHEBI:456215"/>
    </ligand>
</feature>
<feature type="binding site" evidence="1">
    <location>
        <position position="167"/>
    </location>
    <ligand>
        <name>AMP</name>
        <dbReference type="ChEBI" id="CHEBI:456215"/>
    </ligand>
</feature>
<feature type="binding site" evidence="1">
    <location>
        <position position="200"/>
    </location>
    <ligand>
        <name>ATP</name>
        <dbReference type="ChEBI" id="CHEBI:30616"/>
    </ligand>
</feature>